<accession>P63081</accession>
<accession>P23967</accession>
<gene>
    <name type="primary">Atp6v0c</name>
    <name type="synonym">Atp6c</name>
    <name type="synonym">Atp6l</name>
    <name type="synonym">Atpl</name>
</gene>
<reference key="1">
    <citation type="journal article" date="1992" name="J. Biochem.">
        <title>Molecular cloning of a rat liver cDNA encoding the 16 kDa subunit of vacuolar H(+)-ATPases: organellar and tissue distribution of 16 kDa proteolipids.</title>
        <authorList>
            <person name="Nezu J."/>
            <person name="Motojima K."/>
            <person name="Tamura H."/>
            <person name="Ohkuma S."/>
        </authorList>
    </citation>
    <scope>NUCLEOTIDE SEQUENCE [MRNA]</scope>
    <source>
        <tissue>Liver</tissue>
    </source>
</reference>
<reference key="2">
    <citation type="journal article" date="2004" name="Genome Res.">
        <title>The status, quality, and expansion of the NIH full-length cDNA project: the Mammalian Gene Collection (MGC).</title>
        <authorList>
            <consortium name="The MGC Project Team"/>
        </authorList>
    </citation>
    <scope>NUCLEOTIDE SEQUENCE [LARGE SCALE MRNA]</scope>
    <source>
        <tissue>Pituitary</tissue>
    </source>
</reference>
<reference evidence="7 8 9 10 11 12" key="3">
    <citation type="journal article" date="2020" name="Science">
        <title>Structure of V-ATPase from the mammalian brain.</title>
        <authorList>
            <person name="Abbas Y.M."/>
            <person name="Wu D."/>
            <person name="Bueler S.A."/>
            <person name="Robinson C.V."/>
            <person name="Rubinstein J.L."/>
        </authorList>
    </citation>
    <scope>STRUCTURE BY ELECTRON MICROSCOPY (3.80 ANGSTROMS)</scope>
    <scope>FUNCTION</scope>
    <scope>IDENTIFICATION IN THE V-ATPASE COMPLEX</scope>
    <scope>SUBCELLULAR LOCATION</scope>
    <scope>IDENTIFICATION BY MASS SPECTROMETRY</scope>
    <scope>TISSUE SPECIFICITY</scope>
</reference>
<organism>
    <name type="scientific">Rattus norvegicus</name>
    <name type="common">Rat</name>
    <dbReference type="NCBI Taxonomy" id="10116"/>
    <lineage>
        <taxon>Eukaryota</taxon>
        <taxon>Metazoa</taxon>
        <taxon>Chordata</taxon>
        <taxon>Craniata</taxon>
        <taxon>Vertebrata</taxon>
        <taxon>Euteleostomi</taxon>
        <taxon>Mammalia</taxon>
        <taxon>Eutheria</taxon>
        <taxon>Euarchontoglires</taxon>
        <taxon>Glires</taxon>
        <taxon>Rodentia</taxon>
        <taxon>Myomorpha</taxon>
        <taxon>Muroidea</taxon>
        <taxon>Muridae</taxon>
        <taxon>Murinae</taxon>
        <taxon>Rattus</taxon>
    </lineage>
</organism>
<keyword id="KW-0002">3D-structure</keyword>
<keyword id="KW-0968">Cytoplasmic vesicle</keyword>
<keyword id="KW-0375">Hydrogen ion transport</keyword>
<keyword id="KW-0406">Ion transport</keyword>
<keyword id="KW-0472">Membrane</keyword>
<keyword id="KW-1185">Reference proteome</keyword>
<keyword id="KW-0770">Synapse</keyword>
<keyword id="KW-0812">Transmembrane</keyword>
<keyword id="KW-1133">Transmembrane helix</keyword>
<keyword id="KW-0813">Transport</keyword>
<keyword id="KW-0832">Ubl conjugation</keyword>
<feature type="chain" id="PRO_0000071745" description="V-type proton ATPase 16 kDa proteolipid subunit c">
    <location>
        <begin position="1"/>
        <end position="155"/>
    </location>
</feature>
<feature type="topological domain" description="Lumenal" evidence="3">
    <location>
        <begin position="1"/>
        <end position="10"/>
    </location>
</feature>
<feature type="transmembrane region" description="Helical" evidence="3">
    <location>
        <begin position="11"/>
        <end position="33"/>
    </location>
</feature>
<feature type="topological domain" description="Cytoplasmic" evidence="3">
    <location>
        <begin position="34"/>
        <end position="55"/>
    </location>
</feature>
<feature type="transmembrane region" description="Helical" evidence="3">
    <location>
        <begin position="56"/>
        <end position="76"/>
    </location>
</feature>
<feature type="topological domain" description="Lumenal" evidence="3">
    <location>
        <begin position="77"/>
        <end position="92"/>
    </location>
</feature>
<feature type="transmembrane region" description="Helical" evidence="3">
    <location>
        <begin position="93"/>
        <end position="114"/>
    </location>
</feature>
<feature type="topological domain" description="Cytoplasmic" evidence="3">
    <location>
        <begin position="115"/>
        <end position="131"/>
    </location>
</feature>
<feature type="transmembrane region" description="Helical" evidence="3">
    <location>
        <begin position="132"/>
        <end position="152"/>
    </location>
</feature>
<feature type="topological domain" description="Lumenal" evidence="3">
    <location>
        <begin position="153"/>
        <end position="155"/>
    </location>
</feature>
<feature type="site" description="Essential for proton translocation" evidence="6">
    <location>
        <position position="139"/>
    </location>
</feature>
<feature type="turn" evidence="13">
    <location>
        <begin position="9"/>
        <end position="11"/>
    </location>
</feature>
<feature type="helix" evidence="13">
    <location>
        <begin position="12"/>
        <end position="44"/>
    </location>
</feature>
<feature type="turn" evidence="13">
    <location>
        <begin position="45"/>
        <end position="47"/>
    </location>
</feature>
<feature type="helix" evidence="13">
    <location>
        <begin position="49"/>
        <end position="51"/>
    </location>
</feature>
<feature type="helix" evidence="13">
    <location>
        <begin position="54"/>
        <end position="56"/>
    </location>
</feature>
<feature type="helix" evidence="13">
    <location>
        <begin position="57"/>
        <end position="77"/>
    </location>
</feature>
<feature type="helix" evidence="13">
    <location>
        <begin position="86"/>
        <end position="123"/>
    </location>
</feature>
<feature type="helix" evidence="13">
    <location>
        <begin position="127"/>
        <end position="152"/>
    </location>
</feature>
<name>VATL_RAT</name>
<comment type="function">
    <text evidence="4">Proton-conducting pore forming subunit of the V0 complex of vacuolar(H+)-ATPase (V-ATPase), a multisubunit enzyme composed of a peripheral complex (V1) that hydrolyzes ATP and a membrane integral complex (V0) that translocates protons (PubMed:32165585). V-ATPase is responsible for acidifying and maintaining the pH of intracellular compartments and in some cell types, is targeted to the plasma membrane, where it is responsible for acidifying the extracellular environment (PubMed:32165585).</text>
</comment>
<comment type="subunit">
    <text evidence="1 2 4">V-ATPase is a heteromultimeric enzyme made up of two complexes: the ATP-hydrolytic V1 complex and the proton translocation V0 complex (PubMed:32165585). The V1 complex consists of three catalytic AB heterodimers that form a heterohexamer, three peripheral stalks each consisting of EG heterodimers, one central rotor including subunits D and F, and the regulatory subunits C and H (PubMed:32165585). The proton translocation complex V0 consists of the proton transport subunit a, a ring of proteolipid subunits c9c'', rotary subunit d, subunits e and f, and the accessory subunits ATP6AP1/Ac45 and ATP6AP2/PRR (PubMed:32165585). Interacts with the V0 complex V-ATPase subunit a4 ATP6V0A4 (By similarity). Interacts with LASS2 (By similarity). Interacts with RNF182; this interaction leads to ubiquitination and degradation via the proteasome pathway (By similarity).</text>
</comment>
<comment type="subcellular location">
    <subcellularLocation>
        <location evidence="4">Cytoplasmic vesicle</location>
        <location evidence="4">Clathrin-coated vesicle membrane</location>
        <topology evidence="3">Multi-pass membrane protein</topology>
    </subcellularLocation>
    <subcellularLocation>
        <location evidence="4">Cytoplasmic vesicle</location>
        <location evidence="4">Secretory vesicle</location>
        <location evidence="4">Synaptic vesicle membrane</location>
        <topology evidence="3">Multi-pass membrane protein</topology>
    </subcellularLocation>
</comment>
<comment type="tissue specificity">
    <text evidence="4">Expressed in brain (at protein level).</text>
</comment>
<comment type="PTM">
    <text evidence="1">Ubiquitinated by RNF182, leading to its degradation via the ubiquitin-proteasome pathway.</text>
</comment>
<comment type="similarity">
    <text evidence="5">Belongs to the V-ATPase proteolipid subunit family.</text>
</comment>
<protein>
    <recommendedName>
        <fullName evidence="5">V-type proton ATPase 16 kDa proteolipid subunit c</fullName>
        <shortName evidence="5">V-ATPase 16 kDa proteolipid subunit c</shortName>
    </recommendedName>
    <alternativeName>
        <fullName evidence="5">Vacuolar proton pump 16 kDa proteolipid subunit c</fullName>
    </alternativeName>
</protein>
<proteinExistence type="evidence at protein level"/>
<sequence length="155" mass="15808">MADIKNNPEYSSFFGVMGASSAMVFSAMGAAYGTAKSGTGIAAMSVMRPELIMKSIIPVVMAGIIAIYGLVVAVLIANSLTDGITLYRSFLQLGAGLSVGLSGLAAGFAIGIVGDAGVRGTAQQPRLFVGMILILIFAEVLGLYGLIVALILSTK</sequence>
<dbReference type="EMBL" id="D10874">
    <property type="protein sequence ID" value="BAA01643.1"/>
    <property type="molecule type" value="mRNA"/>
</dbReference>
<dbReference type="EMBL" id="BC063154">
    <property type="protein sequence ID" value="AAH63154.1"/>
    <property type="molecule type" value="mRNA"/>
</dbReference>
<dbReference type="PIR" id="JX0226">
    <property type="entry name" value="JX0226"/>
</dbReference>
<dbReference type="RefSeq" id="NP_570836.1">
    <property type="nucleotide sequence ID" value="NM_130823.4"/>
</dbReference>
<dbReference type="RefSeq" id="XP_006245960.1">
    <property type="nucleotide sequence ID" value="XM_006245898.2"/>
</dbReference>
<dbReference type="PDB" id="6VQ6">
    <property type="method" value="EM"/>
    <property type="resolution" value="3.90 A"/>
    <property type="chains" value="g/h/i/j/k/l/m/n/o=1-155"/>
</dbReference>
<dbReference type="PDB" id="6VQ7">
    <property type="method" value="EM"/>
    <property type="resolution" value="4.00 A"/>
    <property type="chains" value="g/h/i/j/k/l/m/n/o=1-155"/>
</dbReference>
<dbReference type="PDB" id="6VQ8">
    <property type="method" value="EM"/>
    <property type="resolution" value="3.90 A"/>
    <property type="chains" value="g/h/i/j/k/l/m/n/o=1-155"/>
</dbReference>
<dbReference type="PDB" id="6VQC">
    <property type="method" value="EM"/>
    <property type="resolution" value="3.80 A"/>
    <property type="chains" value="g/h/i/j/k/l/m/n/o=1-155"/>
</dbReference>
<dbReference type="PDB" id="6VQG">
    <property type="method" value="EM"/>
    <property type="resolution" value="4.20 A"/>
    <property type="chains" value="g/h/i/j/k/l/m/n/o=1-155"/>
</dbReference>
<dbReference type="PDB" id="6VQH">
    <property type="method" value="EM"/>
    <property type="resolution" value="4.40 A"/>
    <property type="chains" value="g/h/i/j/k/l/m/n/o=1-155"/>
</dbReference>
<dbReference type="PDB" id="7UZF">
    <property type="method" value="EM"/>
    <property type="resolution" value="3.80 A"/>
    <property type="chains" value="g/h/i/j/k/l/m/n/o=1-155"/>
</dbReference>
<dbReference type="PDB" id="7UZG">
    <property type="method" value="EM"/>
    <property type="resolution" value="3.70 A"/>
    <property type="chains" value="g/h/i/j/k/l/m/n/o=1-155"/>
</dbReference>
<dbReference type="PDB" id="7UZH">
    <property type="method" value="EM"/>
    <property type="resolution" value="3.80 A"/>
    <property type="chains" value="g/h/i/j/k/l/m/n/o=1-155"/>
</dbReference>
<dbReference type="PDB" id="7UZI">
    <property type="method" value="EM"/>
    <property type="resolution" value="3.90 A"/>
    <property type="chains" value="g/h/i/j/k/l/m/n/o=1-155"/>
</dbReference>
<dbReference type="PDB" id="9B8O">
    <property type="method" value="EM"/>
    <property type="resolution" value="3.20 A"/>
    <property type="chains" value="g/h/i/j/k/l/m/n/o=1-155"/>
</dbReference>
<dbReference type="PDB" id="9BRB">
    <property type="method" value="EM"/>
    <property type="resolution" value="3.60 A"/>
    <property type="chains" value="g/h/i/j/k/l/m/n/o=1-155"/>
</dbReference>
<dbReference type="PDB" id="9BRC">
    <property type="method" value="EM"/>
    <property type="resolution" value="3.90 A"/>
    <property type="chains" value="g/h/i/j/k/l/m/n/o=1-155"/>
</dbReference>
<dbReference type="PDB" id="9BRD">
    <property type="method" value="EM"/>
    <property type="resolution" value="3.50 A"/>
    <property type="chains" value="g/h/i/j/k/l/m/n/o=1-155"/>
</dbReference>
<dbReference type="PDBsum" id="6VQ6"/>
<dbReference type="PDBsum" id="6VQ7"/>
<dbReference type="PDBsum" id="6VQ8"/>
<dbReference type="PDBsum" id="6VQC"/>
<dbReference type="PDBsum" id="6VQG"/>
<dbReference type="PDBsum" id="6VQH"/>
<dbReference type="PDBsum" id="7UZF"/>
<dbReference type="PDBsum" id="7UZG"/>
<dbReference type="PDBsum" id="7UZH"/>
<dbReference type="PDBsum" id="7UZI"/>
<dbReference type="PDBsum" id="9B8O"/>
<dbReference type="PDBsum" id="9BRB"/>
<dbReference type="PDBsum" id="9BRC"/>
<dbReference type="PDBsum" id="9BRD"/>
<dbReference type="EMDB" id="EMD-21348"/>
<dbReference type="EMDB" id="EMD-21349"/>
<dbReference type="EMDB" id="EMD-21350"/>
<dbReference type="EMDB" id="EMD-26909"/>
<dbReference type="EMDB" id="EMD-26910"/>
<dbReference type="EMDB" id="EMD-26911"/>
<dbReference type="EMDB" id="EMD-26912"/>
<dbReference type="EMDB" id="EMD-44350"/>
<dbReference type="SMR" id="P63081"/>
<dbReference type="BioGRID" id="250971">
    <property type="interactions" value="1"/>
</dbReference>
<dbReference type="CORUM" id="P63081"/>
<dbReference type="FunCoup" id="P63081">
    <property type="interactions" value="2259"/>
</dbReference>
<dbReference type="IntAct" id="P63081">
    <property type="interactions" value="4"/>
</dbReference>
<dbReference type="MINT" id="P63081"/>
<dbReference type="STRING" id="10116.ENSRNOP00000008736"/>
<dbReference type="PhosphoSitePlus" id="P63081"/>
<dbReference type="SwissPalm" id="P63081"/>
<dbReference type="jPOST" id="P63081"/>
<dbReference type="PaxDb" id="10116-ENSRNOP00000008736"/>
<dbReference type="Ensembl" id="ENSRNOT00000113937.1">
    <property type="protein sequence ID" value="ENSRNOP00000088542.1"/>
    <property type="gene ID" value="ENSRNOG00000006542.7"/>
</dbReference>
<dbReference type="GeneID" id="170667"/>
<dbReference type="KEGG" id="rno:170667"/>
<dbReference type="UCSC" id="RGD:621394">
    <property type="organism name" value="rat"/>
</dbReference>
<dbReference type="AGR" id="RGD:621394"/>
<dbReference type="CTD" id="527"/>
<dbReference type="RGD" id="621394">
    <property type="gene designation" value="Atp6v0c"/>
</dbReference>
<dbReference type="eggNOG" id="KOG0232">
    <property type="taxonomic scope" value="Eukaryota"/>
</dbReference>
<dbReference type="GeneTree" id="ENSGT00550000074873"/>
<dbReference type="HOGENOM" id="CLU_085752_1_2_1"/>
<dbReference type="InParanoid" id="P63081"/>
<dbReference type="OMA" id="MSVCPPY"/>
<dbReference type="OrthoDB" id="1744869at2759"/>
<dbReference type="PhylomeDB" id="P63081"/>
<dbReference type="TreeFam" id="TF300025"/>
<dbReference type="Reactome" id="R-RNO-1222556">
    <property type="pathway name" value="ROS and RNS production in phagocytes"/>
</dbReference>
<dbReference type="Reactome" id="R-RNO-6798695">
    <property type="pathway name" value="Neutrophil degranulation"/>
</dbReference>
<dbReference type="Reactome" id="R-RNO-77387">
    <property type="pathway name" value="Insulin receptor recycling"/>
</dbReference>
<dbReference type="Reactome" id="R-RNO-917977">
    <property type="pathway name" value="Transferrin endocytosis and recycling"/>
</dbReference>
<dbReference type="Reactome" id="R-RNO-9639288">
    <property type="pathway name" value="Amino acids regulate mTORC1"/>
</dbReference>
<dbReference type="Reactome" id="R-RNO-983712">
    <property type="pathway name" value="Ion channel transport"/>
</dbReference>
<dbReference type="PRO" id="PR:P63081"/>
<dbReference type="Proteomes" id="UP000002494">
    <property type="component" value="Chromosome 10"/>
</dbReference>
<dbReference type="Bgee" id="ENSRNOG00000006542">
    <property type="expression patterns" value="Expressed in Ammon's horn and 19 other cell types or tissues"/>
</dbReference>
<dbReference type="GO" id="GO:0030665">
    <property type="term" value="C:clathrin-coated vesicle membrane"/>
    <property type="evidence" value="ECO:0007669"/>
    <property type="project" value="UniProtKB-SubCell"/>
</dbReference>
<dbReference type="GO" id="GO:0016020">
    <property type="term" value="C:membrane"/>
    <property type="evidence" value="ECO:0000266"/>
    <property type="project" value="RGD"/>
</dbReference>
<dbReference type="GO" id="GO:0033176">
    <property type="term" value="C:proton-transporting V-type ATPase complex"/>
    <property type="evidence" value="ECO:0000266"/>
    <property type="project" value="RGD"/>
</dbReference>
<dbReference type="GO" id="GO:0008021">
    <property type="term" value="C:synaptic vesicle"/>
    <property type="evidence" value="ECO:0000314"/>
    <property type="project" value="RGD"/>
</dbReference>
<dbReference type="GO" id="GO:0030672">
    <property type="term" value="C:synaptic vesicle membrane"/>
    <property type="evidence" value="ECO:0000314"/>
    <property type="project" value="SynGO"/>
</dbReference>
<dbReference type="GO" id="GO:0000220">
    <property type="term" value="C:vacuolar proton-transporting V-type ATPase, V0 domain"/>
    <property type="evidence" value="ECO:0000250"/>
    <property type="project" value="UniProtKB"/>
</dbReference>
<dbReference type="GO" id="GO:0046961">
    <property type="term" value="F:proton-transporting ATPase activity, rotational mechanism"/>
    <property type="evidence" value="ECO:0007669"/>
    <property type="project" value="InterPro"/>
</dbReference>
<dbReference type="GO" id="GO:0031625">
    <property type="term" value="F:ubiquitin protein ligase binding"/>
    <property type="evidence" value="ECO:0000266"/>
    <property type="project" value="RGD"/>
</dbReference>
<dbReference type="GO" id="GO:1904093">
    <property type="term" value="P:negative regulation of autophagic cell death"/>
    <property type="evidence" value="ECO:0000315"/>
    <property type="project" value="RGD"/>
</dbReference>
<dbReference type="GO" id="GO:0070374">
    <property type="term" value="P:positive regulation of ERK1 and ERK2 cascade"/>
    <property type="evidence" value="ECO:0000315"/>
    <property type="project" value="RGD"/>
</dbReference>
<dbReference type="GO" id="GO:0030177">
    <property type="term" value="P:positive regulation of Wnt signaling pathway"/>
    <property type="evidence" value="ECO:0000266"/>
    <property type="project" value="RGD"/>
</dbReference>
<dbReference type="GO" id="GO:0097401">
    <property type="term" value="P:synaptic vesicle lumen acidification"/>
    <property type="evidence" value="ECO:0000266"/>
    <property type="project" value="RGD"/>
</dbReference>
<dbReference type="CDD" id="cd18175">
    <property type="entry name" value="ATP-synt_Vo_c_ATP6C_rpt1"/>
    <property type="match status" value="1"/>
</dbReference>
<dbReference type="CDD" id="cd18176">
    <property type="entry name" value="ATP-synt_Vo_c_ATP6C_rpt2"/>
    <property type="match status" value="1"/>
</dbReference>
<dbReference type="FunFam" id="1.20.120.610:FF:000001">
    <property type="entry name" value="V-type proton ATPase proteolipid subunit"/>
    <property type="match status" value="1"/>
</dbReference>
<dbReference type="Gene3D" id="1.20.120.610">
    <property type="entry name" value="lithium bound rotor ring of v- atpase"/>
    <property type="match status" value="1"/>
</dbReference>
<dbReference type="InterPro" id="IPR002379">
    <property type="entry name" value="ATPase_proteolipid_c-like_dom"/>
</dbReference>
<dbReference type="InterPro" id="IPR000245">
    <property type="entry name" value="ATPase_proteolipid_csu"/>
</dbReference>
<dbReference type="InterPro" id="IPR011555">
    <property type="entry name" value="ATPase_proteolipid_su_C_euk"/>
</dbReference>
<dbReference type="InterPro" id="IPR035921">
    <property type="entry name" value="F/V-ATP_Csub_sf"/>
</dbReference>
<dbReference type="NCBIfam" id="TIGR01100">
    <property type="entry name" value="V_ATP_synt_C"/>
    <property type="match status" value="1"/>
</dbReference>
<dbReference type="PANTHER" id="PTHR10263">
    <property type="entry name" value="V-TYPE PROTON ATPASE PROTEOLIPID SUBUNIT"/>
    <property type="match status" value="1"/>
</dbReference>
<dbReference type="Pfam" id="PF00137">
    <property type="entry name" value="ATP-synt_C"/>
    <property type="match status" value="2"/>
</dbReference>
<dbReference type="PRINTS" id="PR00122">
    <property type="entry name" value="VACATPASE"/>
</dbReference>
<dbReference type="SUPFAM" id="SSF81333">
    <property type="entry name" value="F1F0 ATP synthase subunit C"/>
    <property type="match status" value="2"/>
</dbReference>
<evidence type="ECO:0000250" key="1">
    <source>
        <dbReference type="UniProtKB" id="P27449"/>
    </source>
</evidence>
<evidence type="ECO:0000250" key="2">
    <source>
        <dbReference type="UniProtKB" id="P63082"/>
    </source>
</evidence>
<evidence type="ECO:0000255" key="3"/>
<evidence type="ECO:0000269" key="4">
    <source>
    </source>
</evidence>
<evidence type="ECO:0000305" key="5"/>
<evidence type="ECO:0000305" key="6">
    <source>
    </source>
</evidence>
<evidence type="ECO:0007744" key="7">
    <source>
        <dbReference type="PDB" id="6VQ6"/>
    </source>
</evidence>
<evidence type="ECO:0007744" key="8">
    <source>
        <dbReference type="PDB" id="6VQ7"/>
    </source>
</evidence>
<evidence type="ECO:0007744" key="9">
    <source>
        <dbReference type="PDB" id="6VQ8"/>
    </source>
</evidence>
<evidence type="ECO:0007744" key="10">
    <source>
        <dbReference type="PDB" id="6VQC"/>
    </source>
</evidence>
<evidence type="ECO:0007744" key="11">
    <source>
        <dbReference type="PDB" id="6VQG"/>
    </source>
</evidence>
<evidence type="ECO:0007744" key="12">
    <source>
        <dbReference type="PDB" id="6VQH"/>
    </source>
</evidence>
<evidence type="ECO:0007829" key="13">
    <source>
        <dbReference type="PDB" id="9B8O"/>
    </source>
</evidence>